<comment type="function">
    <text evidence="1 2">Receptor for prostaglandin D2 (PGD2). The activity of this receptor is mainly mediated by G(s) proteins that stimulate adenylate cyclase, resulting in an elevation of intracellular cAMP. A mobilization of calcium is also observed, but without formation of inositol 1,4,5-trisphosphate (By similarity). Involved in PLA2G3-dependent maturation of mast cells. PLA2G3 is secreted by immature mast cells and acts on nearby fibroblasts upstream to PTDGS to synthesize PGD2, which in turn promotes mast cell maturation and degranulation via PTGDR (By similarity).</text>
</comment>
<comment type="interaction">
    <interactant intactId="EBI-20731195">
        <id>Q13258</id>
    </interactant>
    <interactant intactId="EBI-447404">
        <id>Q9NZ52</id>
        <label>GGA3</label>
    </interactant>
    <organismsDiffer>false</organismsDiffer>
    <experiments>5</experiments>
</comment>
<comment type="subcellular location">
    <subcellularLocation>
        <location evidence="9">Cell membrane</location>
        <topology evidence="9">Multi-pass membrane protein</topology>
    </subcellularLocation>
</comment>
<comment type="alternative products">
    <event type="alternative splicing"/>
    <isoform>
        <id>Q13258-1</id>
        <name>1</name>
        <sequence type="displayed"/>
    </isoform>
    <isoform>
        <id>Q13258-2</id>
        <name>2</name>
        <sequence type="described" ref="VSP_055141 VSP_055142"/>
    </isoform>
</comment>
<comment type="tissue specificity">
    <text evidence="5 7">Expressed in retinal choroid, ciliary epithelium, longitudinal and circular ciliary muscles, iris, small intestine and platelet membranes.</text>
</comment>
<comment type="disease" evidence="6">
    <disease id="DI-02869">
        <name>Asthma-related traits 1</name>
        <acronym>ASRT1</acronym>
        <description>Asthma-related traits include clinical symptoms of asthma, such as coughing, wheezing, dyspnea, bronchial hyperresponsiveness as assessed by methacholine challenge test, serum IgE levels, atopy and atopic dermatitis.</description>
        <dbReference type="MIM" id="607277"/>
    </disease>
    <text>Disease susceptibility is associated with variants affecting the gene represented in this entry.</text>
</comment>
<comment type="similarity">
    <text evidence="4">Belongs to the G-protein coupled receptor 1 family.</text>
</comment>
<protein>
    <recommendedName>
        <fullName>Prostaglandin D2 receptor</fullName>
        <shortName>PGD receptor</shortName>
        <shortName>PGD2 receptor</shortName>
    </recommendedName>
    <alternativeName>
        <fullName>Prostanoid DP receptor</fullName>
    </alternativeName>
</protein>
<feature type="chain" id="PRO_0000070047" description="Prostaglandin D2 receptor">
    <location>
        <begin position="1"/>
        <end position="359"/>
    </location>
</feature>
<feature type="topological domain" description="Extracellular" evidence="3">
    <location>
        <begin position="1"/>
        <end position="21"/>
    </location>
</feature>
<feature type="transmembrane region" description="Helical; Name=1" evidence="3">
    <location>
        <begin position="22"/>
        <end position="42"/>
    </location>
</feature>
<feature type="topological domain" description="Cytoplasmic" evidence="3">
    <location>
        <begin position="43"/>
        <end position="59"/>
    </location>
</feature>
<feature type="transmembrane region" description="Helical; Name=2" evidence="3">
    <location>
        <begin position="60"/>
        <end position="80"/>
    </location>
</feature>
<feature type="topological domain" description="Extracellular" evidence="3">
    <location>
        <begin position="81"/>
        <end position="107"/>
    </location>
</feature>
<feature type="transmembrane region" description="Helical; Name=3" evidence="3">
    <location>
        <begin position="108"/>
        <end position="128"/>
    </location>
</feature>
<feature type="topological domain" description="Cytoplasmic" evidence="3">
    <location>
        <begin position="129"/>
        <end position="150"/>
    </location>
</feature>
<feature type="transmembrane region" description="Helical; Name=4" evidence="3">
    <location>
        <begin position="151"/>
        <end position="171"/>
    </location>
</feature>
<feature type="topological domain" description="Extracellular" evidence="3">
    <location>
        <begin position="172"/>
        <end position="195"/>
    </location>
</feature>
<feature type="transmembrane region" description="Helical; Name=5" evidence="3">
    <location>
        <begin position="196"/>
        <end position="216"/>
    </location>
</feature>
<feature type="topological domain" description="Cytoplasmic" evidence="3">
    <location>
        <begin position="217"/>
        <end position="262"/>
    </location>
</feature>
<feature type="transmembrane region" description="Helical; Name=6" evidence="3">
    <location>
        <begin position="263"/>
        <end position="283"/>
    </location>
</feature>
<feature type="topological domain" description="Extracellular" evidence="3">
    <location>
        <begin position="284"/>
        <end position="310"/>
    </location>
</feature>
<feature type="transmembrane region" description="Helical; Name=7" evidence="3">
    <location>
        <begin position="311"/>
        <end position="331"/>
    </location>
</feature>
<feature type="topological domain" description="Cytoplasmic" evidence="3">
    <location>
        <begin position="332"/>
        <end position="359"/>
    </location>
</feature>
<feature type="glycosylation site" description="N-linked (GlcNAc...) asparagine" evidence="3">
    <location>
        <position position="10"/>
    </location>
</feature>
<feature type="glycosylation site" description="N-linked (GlcNAc...) asparagine" evidence="3">
    <location>
        <position position="90"/>
    </location>
</feature>
<feature type="glycosylation site" description="N-linked (GlcNAc...) asparagine" evidence="3">
    <location>
        <position position="297"/>
    </location>
</feature>
<feature type="disulfide bond" evidence="4">
    <location>
        <begin position="105"/>
        <end position="183"/>
    </location>
</feature>
<feature type="splice variant" id="VSP_055141" description="In isoform 2." evidence="9">
    <original>YRAYYGAFKDVKEK</original>
    <variation>AFVPGVPAKTPGSR</variation>
    <location>
        <begin position="283"/>
        <end position="296"/>
    </location>
</feature>
<feature type="splice variant" id="VSP_055142" description="In isoform 2." evidence="9">
    <location>
        <begin position="297"/>
        <end position="359"/>
    </location>
</feature>
<feature type="sequence variant" id="VAR_033482" description="In dbSNP:rs41311442." evidence="8">
    <original>R</original>
    <variation>C</variation>
    <location>
        <position position="7"/>
    </location>
</feature>
<feature type="sequence variant" id="VAR_054975" description="In dbSNP:rs41312444." evidence="8">
    <original>G</original>
    <variation>E</variation>
    <location>
        <position position="198"/>
    </location>
</feature>
<feature type="sequence variant" id="VAR_033483" description="In dbSNP:rs41312504." evidence="8">
    <original>E</original>
    <variation>A</variation>
    <location>
        <position position="301"/>
    </location>
</feature>
<feature type="sequence variant" id="VAR_054976" description="In dbSNP:rs41312506." evidence="8">
    <original>R</original>
    <variation>Q</variation>
    <location>
        <position position="332"/>
    </location>
</feature>
<proteinExistence type="evidence at protein level"/>
<name>PD2R_HUMAN</name>
<reference key="1">
    <citation type="journal article" date="1995" name="J. Biol. Chem.">
        <title>Molecular cloning and characterization of the human prostanoid DP receptor.</title>
        <authorList>
            <person name="Boie Y."/>
            <person name="Sawyer N."/>
            <person name="Slipetz D.M."/>
            <person name="Metters K.M."/>
            <person name="Abramovitz M."/>
        </authorList>
    </citation>
    <scope>NUCLEOTIDE SEQUENCE [GENOMIC DNA / MRNA] (ISOFORM 1)</scope>
</reference>
<reference key="2">
    <citation type="submission" date="2007-04" db="EMBL/GenBank/DDBJ databases">
        <authorList>
            <person name="Martin A.L."/>
            <person name="Kaighin V.A."/>
            <person name="Aronstam R.S."/>
        </authorList>
    </citation>
    <scope>NUCLEOTIDE SEQUENCE [MRNA] (ISOFORM 1)</scope>
    <source>
        <tissue>Small intestine</tissue>
    </source>
</reference>
<reference key="3">
    <citation type="submission" date="2006-02" db="EMBL/GenBank/DDBJ databases">
        <authorList>
            <consortium name="SeattleSNPs variation discovery resource"/>
        </authorList>
    </citation>
    <scope>NUCLEOTIDE SEQUENCE [GENOMIC DNA]</scope>
    <scope>VARIANTS CYS-7; GLU-198; ALA-301 AND GLN-332</scope>
</reference>
<reference key="4">
    <citation type="journal article" date="2003" name="Nature">
        <title>The DNA sequence and analysis of human chromosome 14.</title>
        <authorList>
            <person name="Heilig R."/>
            <person name="Eckenberg R."/>
            <person name="Petit J.-L."/>
            <person name="Fonknechten N."/>
            <person name="Da Silva C."/>
            <person name="Cattolico L."/>
            <person name="Levy M."/>
            <person name="Barbe V."/>
            <person name="De Berardinis V."/>
            <person name="Ureta-Vidal A."/>
            <person name="Pelletier E."/>
            <person name="Vico V."/>
            <person name="Anthouard V."/>
            <person name="Rowen L."/>
            <person name="Madan A."/>
            <person name="Qin S."/>
            <person name="Sun H."/>
            <person name="Du H."/>
            <person name="Pepin K."/>
            <person name="Artiguenave F."/>
            <person name="Robert C."/>
            <person name="Cruaud C."/>
            <person name="Bruels T."/>
            <person name="Jaillon O."/>
            <person name="Friedlander L."/>
            <person name="Samson G."/>
            <person name="Brottier P."/>
            <person name="Cure S."/>
            <person name="Segurens B."/>
            <person name="Aniere F."/>
            <person name="Samain S."/>
            <person name="Crespeau H."/>
            <person name="Abbasi N."/>
            <person name="Aiach N."/>
            <person name="Boscus D."/>
            <person name="Dickhoff R."/>
            <person name="Dors M."/>
            <person name="Dubois I."/>
            <person name="Friedman C."/>
            <person name="Gouyvenoux M."/>
            <person name="James R."/>
            <person name="Madan A."/>
            <person name="Mairey-Estrada B."/>
            <person name="Mangenot S."/>
            <person name="Martins N."/>
            <person name="Menard M."/>
            <person name="Oztas S."/>
            <person name="Ratcliffe A."/>
            <person name="Shaffer T."/>
            <person name="Trask B."/>
            <person name="Vacherie B."/>
            <person name="Bellemere C."/>
            <person name="Belser C."/>
            <person name="Besnard-Gonnet M."/>
            <person name="Bartol-Mavel D."/>
            <person name="Boutard M."/>
            <person name="Briez-Silla S."/>
            <person name="Combette S."/>
            <person name="Dufosse-Laurent V."/>
            <person name="Ferron C."/>
            <person name="Lechaplais C."/>
            <person name="Louesse C."/>
            <person name="Muselet D."/>
            <person name="Magdelenat G."/>
            <person name="Pateau E."/>
            <person name="Petit E."/>
            <person name="Sirvain-Trukniewicz P."/>
            <person name="Trybou A."/>
            <person name="Vega-Czarny N."/>
            <person name="Bataille E."/>
            <person name="Bluet E."/>
            <person name="Bordelais I."/>
            <person name="Dubois M."/>
            <person name="Dumont C."/>
            <person name="Guerin T."/>
            <person name="Haffray S."/>
            <person name="Hammadi R."/>
            <person name="Muanga J."/>
            <person name="Pellouin V."/>
            <person name="Robert D."/>
            <person name="Wunderle E."/>
            <person name="Gauguet G."/>
            <person name="Roy A."/>
            <person name="Sainte-Marthe L."/>
            <person name="Verdier J."/>
            <person name="Verdier-Discala C."/>
            <person name="Hillier L.W."/>
            <person name="Fulton L."/>
            <person name="McPherson J."/>
            <person name="Matsuda F."/>
            <person name="Wilson R."/>
            <person name="Scarpelli C."/>
            <person name="Gyapay G."/>
            <person name="Wincker P."/>
            <person name="Saurin W."/>
            <person name="Quetier F."/>
            <person name="Waterston R."/>
            <person name="Hood L."/>
            <person name="Weissenbach J."/>
        </authorList>
    </citation>
    <scope>NUCLEOTIDE SEQUENCE [LARGE SCALE GENOMIC DNA]</scope>
</reference>
<reference key="5">
    <citation type="submission" date="2005-09" db="EMBL/GenBank/DDBJ databases">
        <authorList>
            <person name="Mural R.J."/>
            <person name="Istrail S."/>
            <person name="Sutton G.G."/>
            <person name="Florea L."/>
            <person name="Halpern A.L."/>
            <person name="Mobarry C.M."/>
            <person name="Lippert R."/>
            <person name="Walenz B."/>
            <person name="Shatkay H."/>
            <person name="Dew I."/>
            <person name="Miller J.R."/>
            <person name="Flanigan M.J."/>
            <person name="Edwards N.J."/>
            <person name="Bolanos R."/>
            <person name="Fasulo D."/>
            <person name="Halldorsson B.V."/>
            <person name="Hannenhalli S."/>
            <person name="Turner R."/>
            <person name="Yooseph S."/>
            <person name="Lu F."/>
            <person name="Nusskern D.R."/>
            <person name="Shue B.C."/>
            <person name="Zheng X.H."/>
            <person name="Zhong F."/>
            <person name="Delcher A.L."/>
            <person name="Huson D.H."/>
            <person name="Kravitz S.A."/>
            <person name="Mouchard L."/>
            <person name="Reinert K."/>
            <person name="Remington K.A."/>
            <person name="Clark A.G."/>
            <person name="Waterman M.S."/>
            <person name="Eichler E.E."/>
            <person name="Adams M.D."/>
            <person name="Hunkapiller M.W."/>
            <person name="Myers E.W."/>
            <person name="Venter J.C."/>
        </authorList>
    </citation>
    <scope>NUCLEOTIDE SEQUENCE [LARGE SCALE GENOMIC DNA]</scope>
</reference>
<reference key="6">
    <citation type="journal article" date="2004" name="Genome Res.">
        <title>The status, quality, and expansion of the NIH full-length cDNA project: the Mammalian Gene Collection (MGC).</title>
        <authorList>
            <consortium name="The MGC Project Team"/>
        </authorList>
    </citation>
    <scope>NUCLEOTIDE SEQUENCE [LARGE SCALE MRNA] (ISOFORM 1)</scope>
    <source>
        <tissue>Brain</tissue>
    </source>
</reference>
<reference key="7">
    <citation type="journal article" date="1983" name="Prostaglandins">
        <title>Pharmacological and cardiovascular properties of a hydantoin derivative, BW 245 C, with high affinity and selectivity for PGD2 receptors.</title>
        <authorList>
            <person name="Town M.H."/>
            <person name="Casals-Stenzel J."/>
            <person name="Schillinger E."/>
        </authorList>
    </citation>
    <scope>TISSUE SPECIFICITY</scope>
</reference>
<reference key="8">
    <citation type="journal article" date="2000" name="Br. J. Pharmacol.">
        <title>Pharmacology and autoradiography of human DP prostanoid receptors using [(3)H]-BWA868C, a DP receptor-selective antagonist radioligand.</title>
        <authorList>
            <person name="Sharif N.A."/>
            <person name="Williams G.W."/>
            <person name="Davis T.L."/>
        </authorList>
    </citation>
    <scope>TISSUE SPECIFICITY</scope>
</reference>
<reference key="9">
    <citation type="journal article" date="2004" name="N. Engl. J. Med.">
        <title>Role of prostanoid DP receptor variants in susceptibility to asthma.</title>
        <authorList>
            <person name="Oguma T."/>
            <person name="Palmer L.J."/>
            <person name="Birben E."/>
            <person name="Sonna L.A."/>
            <person name="Asano K."/>
            <person name="Lilly C.M."/>
        </authorList>
    </citation>
    <scope>INVOLVEMENT IN SUSCEPTIBILITY TO ASRT1</scope>
</reference>
<evidence type="ECO:0000250" key="1">
    <source>
        <dbReference type="UniProtKB" id="P70263"/>
    </source>
</evidence>
<evidence type="ECO:0000250" key="2">
    <source>
        <dbReference type="UniProtKB" id="Q9R261"/>
    </source>
</evidence>
<evidence type="ECO:0000255" key="3"/>
<evidence type="ECO:0000255" key="4">
    <source>
        <dbReference type="PROSITE-ProRule" id="PRU00521"/>
    </source>
</evidence>
<evidence type="ECO:0000269" key="5">
    <source>
    </source>
</evidence>
<evidence type="ECO:0000269" key="6">
    <source>
    </source>
</evidence>
<evidence type="ECO:0000269" key="7">
    <source>
    </source>
</evidence>
<evidence type="ECO:0000269" key="8">
    <source ref="3"/>
</evidence>
<evidence type="ECO:0000305" key="9"/>
<accession>Q13258</accession>
<accession>G3V5L3</accession>
<accession>Q13250</accession>
<accession>Q13251</accession>
<accession>Q1ZZ52</accession>
<organism>
    <name type="scientific">Homo sapiens</name>
    <name type="common">Human</name>
    <dbReference type="NCBI Taxonomy" id="9606"/>
    <lineage>
        <taxon>Eukaryota</taxon>
        <taxon>Metazoa</taxon>
        <taxon>Chordata</taxon>
        <taxon>Craniata</taxon>
        <taxon>Vertebrata</taxon>
        <taxon>Euteleostomi</taxon>
        <taxon>Mammalia</taxon>
        <taxon>Eutheria</taxon>
        <taxon>Euarchontoglires</taxon>
        <taxon>Primates</taxon>
        <taxon>Haplorrhini</taxon>
        <taxon>Catarrhini</taxon>
        <taxon>Hominidae</taxon>
        <taxon>Homo</taxon>
    </lineage>
</organism>
<sequence length="359" mass="40271">MKSPFYRCQNTTSVEKGNSAVMGGVLFSTGLLGNLLALGLLARSGLGWCSRRPLRPLPSVFYMLVCGLTVTDLLGKCLLSPVVLAAYAQNRSLRVLAPALDNSLCQAFAFFMSFFGLSSTLQLLAMALECWLSLGHPFFYRRHITLRLGALVAPVVSAFSLAFCALPFMGFGKFVQYCPGTWCFIQMVHEEGSLSVLGYSVLYSSLMALLVLATVLCNLGAMRNLYAMHRRLQRHPRSCTRDCAEPRADGREASPQPLEELDHLLLLALMTVLFTMCSLPVIYRAYYGAFKDVKEKNRTSEEAEDLRALRFLSVISIVDPWIFIIFRSPVFRIFFHKIFIRPLRYRSRCSNSTNMESSL</sequence>
<keyword id="KW-0025">Alternative splicing</keyword>
<keyword id="KW-1058">Asthma</keyword>
<keyword id="KW-1003">Cell membrane</keyword>
<keyword id="KW-1015">Disulfide bond</keyword>
<keyword id="KW-0297">G-protein coupled receptor</keyword>
<keyword id="KW-0325">Glycoprotein</keyword>
<keyword id="KW-0467">Mast cell degranulation</keyword>
<keyword id="KW-0472">Membrane</keyword>
<keyword id="KW-1267">Proteomics identification</keyword>
<keyword id="KW-0675">Receptor</keyword>
<keyword id="KW-1185">Reference proteome</keyword>
<keyword id="KW-0807">Transducer</keyword>
<keyword id="KW-0812">Transmembrane</keyword>
<keyword id="KW-1133">Transmembrane helix</keyword>
<dbReference type="EMBL" id="U31098">
    <property type="protein sequence ID" value="AAC50176.1"/>
    <property type="molecule type" value="Genomic_DNA"/>
</dbReference>
<dbReference type="EMBL" id="U31099">
    <property type="protein sequence ID" value="AAC50177.1"/>
    <property type="molecule type" value="mRNA"/>
</dbReference>
<dbReference type="EMBL" id="U31332">
    <property type="protein sequence ID" value="AAC50178.1"/>
    <property type="molecule type" value="Genomic_DNA"/>
</dbReference>
<dbReference type="EMBL" id="EF577397">
    <property type="protein sequence ID" value="ABQ52417.1"/>
    <property type="molecule type" value="mRNA"/>
</dbReference>
<dbReference type="EMBL" id="DQ418808">
    <property type="protein sequence ID" value="ABD72608.1"/>
    <property type="molecule type" value="Genomic_DNA"/>
</dbReference>
<dbReference type="EMBL" id="AL365475">
    <property type="status" value="NOT_ANNOTATED_CDS"/>
    <property type="molecule type" value="Genomic_DNA"/>
</dbReference>
<dbReference type="EMBL" id="CH471078">
    <property type="protein sequence ID" value="EAW65657.1"/>
    <property type="molecule type" value="Genomic_DNA"/>
</dbReference>
<dbReference type="EMBL" id="BC040968">
    <property type="protein sequence ID" value="AAH40968.1"/>
    <property type="molecule type" value="mRNA"/>
</dbReference>
<dbReference type="CCDS" id="CCDS61454.1">
    <molecule id="Q13258-2"/>
</dbReference>
<dbReference type="CCDS" id="CCDS9707.1">
    <molecule id="Q13258-1"/>
</dbReference>
<dbReference type="PIR" id="I39153">
    <property type="entry name" value="I39153"/>
</dbReference>
<dbReference type="RefSeq" id="NP_000944.1">
    <molecule id="Q13258-1"/>
    <property type="nucleotide sequence ID" value="NM_000953.3"/>
</dbReference>
<dbReference type="RefSeq" id="NP_001268398.1">
    <molecule id="Q13258-2"/>
    <property type="nucleotide sequence ID" value="NM_001281469.2"/>
</dbReference>
<dbReference type="RefSeq" id="XP_005267948.1">
    <molecule id="Q13258-1"/>
    <property type="nucleotide sequence ID" value="XM_005267891.5"/>
</dbReference>
<dbReference type="RefSeq" id="XP_054232419.1">
    <molecule id="Q13258-1"/>
    <property type="nucleotide sequence ID" value="XM_054376444.1"/>
</dbReference>
<dbReference type="SMR" id="Q13258"/>
<dbReference type="BioGRID" id="111701">
    <property type="interactions" value="10"/>
</dbReference>
<dbReference type="CORUM" id="Q13258"/>
<dbReference type="FunCoup" id="Q13258">
    <property type="interactions" value="856"/>
</dbReference>
<dbReference type="IntAct" id="Q13258">
    <property type="interactions" value="5"/>
</dbReference>
<dbReference type="MINT" id="Q13258"/>
<dbReference type="STRING" id="9606.ENSP00000303424"/>
<dbReference type="BindingDB" id="Q13258"/>
<dbReference type="ChEMBL" id="CHEMBL4427"/>
<dbReference type="DrugBank" id="DB11507">
    <property type="generic name" value="Cloprostenol"/>
</dbReference>
<dbReference type="DrugBank" id="DB12789">
    <property type="generic name" value="Dinoprost"/>
</dbReference>
<dbReference type="DrugBank" id="DB11629">
    <property type="generic name" value="Laropiprant"/>
</dbReference>
<dbReference type="DrugBank" id="DB00716">
    <property type="generic name" value="Nedocromil"/>
</dbReference>
<dbReference type="DrugBank" id="DB02056">
    <property type="generic name" value="Prostaglandin D2"/>
</dbReference>
<dbReference type="DrugBank" id="DB12562">
    <property type="generic name" value="Setipiprant"/>
</dbReference>
<dbReference type="DrugBank" id="DB00374">
    <property type="generic name" value="Treprostinil"/>
</dbReference>
<dbReference type="DrugBank" id="DB12272">
    <property type="generic name" value="Vidupiprant"/>
</dbReference>
<dbReference type="DrugCentral" id="Q13258"/>
<dbReference type="GuidetoPHARMACOLOGY" id="338"/>
<dbReference type="SwissLipids" id="SLP:000001561"/>
<dbReference type="GlyCosmos" id="Q13258">
    <property type="glycosylation" value="3 sites, No reported glycans"/>
</dbReference>
<dbReference type="GlyGen" id="Q13258">
    <property type="glycosylation" value="3 sites"/>
</dbReference>
<dbReference type="iPTMnet" id="Q13258"/>
<dbReference type="PhosphoSitePlus" id="Q13258"/>
<dbReference type="BioMuta" id="PTGDR"/>
<dbReference type="DMDM" id="2495009"/>
<dbReference type="MassIVE" id="Q13258"/>
<dbReference type="PaxDb" id="9606-ENSP00000303424"/>
<dbReference type="PeptideAtlas" id="Q13258"/>
<dbReference type="ProteomicsDB" id="59257">
    <molecule id="Q13258-1"/>
</dbReference>
<dbReference type="Antibodypedia" id="10764">
    <property type="antibodies" value="220 antibodies from 30 providers"/>
</dbReference>
<dbReference type="DNASU" id="5729"/>
<dbReference type="Ensembl" id="ENST00000306051.3">
    <molecule id="Q13258-1"/>
    <property type="protein sequence ID" value="ENSP00000303424.2"/>
    <property type="gene ID" value="ENSG00000168229.4"/>
</dbReference>
<dbReference type="Ensembl" id="ENST00000553372.1">
    <molecule id="Q13258-2"/>
    <property type="protein sequence ID" value="ENSP00000452408.1"/>
    <property type="gene ID" value="ENSG00000168229.4"/>
</dbReference>
<dbReference type="GeneID" id="5729"/>
<dbReference type="KEGG" id="hsa:5729"/>
<dbReference type="MANE-Select" id="ENST00000306051.3">
    <property type="protein sequence ID" value="ENSP00000303424.2"/>
    <property type="RefSeq nucleotide sequence ID" value="NM_000953.3"/>
    <property type="RefSeq protein sequence ID" value="NP_000944.1"/>
</dbReference>
<dbReference type="UCSC" id="uc001wzq.3">
    <molecule id="Q13258-1"/>
    <property type="organism name" value="human"/>
</dbReference>
<dbReference type="AGR" id="HGNC:9591"/>
<dbReference type="CTD" id="5729"/>
<dbReference type="DisGeNET" id="5729"/>
<dbReference type="GeneCards" id="PTGDR"/>
<dbReference type="HGNC" id="HGNC:9591">
    <property type="gene designation" value="PTGDR"/>
</dbReference>
<dbReference type="HPA" id="ENSG00000168229">
    <property type="expression patterns" value="Tissue enhanced (intestine, lymphoid tissue)"/>
</dbReference>
<dbReference type="MalaCards" id="PTGDR"/>
<dbReference type="MIM" id="604687">
    <property type="type" value="gene"/>
</dbReference>
<dbReference type="MIM" id="607277">
    <property type="type" value="phenotype"/>
</dbReference>
<dbReference type="neXtProt" id="NX_Q13258"/>
<dbReference type="OpenTargets" id="ENSG00000168229"/>
<dbReference type="PharmGKB" id="PA285"/>
<dbReference type="VEuPathDB" id="HostDB:ENSG00000168229"/>
<dbReference type="eggNOG" id="KOG3656">
    <property type="taxonomic scope" value="Eukaryota"/>
</dbReference>
<dbReference type="GeneTree" id="ENSGT01050000244902"/>
<dbReference type="HOGENOM" id="CLU_045991_0_2_1"/>
<dbReference type="InParanoid" id="Q13258"/>
<dbReference type="OMA" id="NWHSNSC"/>
<dbReference type="OrthoDB" id="5959154at2759"/>
<dbReference type="PAN-GO" id="Q13258">
    <property type="GO annotations" value="4 GO annotations based on evolutionary models"/>
</dbReference>
<dbReference type="PhylomeDB" id="Q13258"/>
<dbReference type="TreeFam" id="TF324982"/>
<dbReference type="PathwayCommons" id="Q13258"/>
<dbReference type="Reactome" id="R-HSA-391908">
    <property type="pathway name" value="Prostanoid ligand receptors"/>
</dbReference>
<dbReference type="Reactome" id="R-HSA-418555">
    <property type="pathway name" value="G alpha (s) signalling events"/>
</dbReference>
<dbReference type="SignaLink" id="Q13258"/>
<dbReference type="SIGNOR" id="Q13258"/>
<dbReference type="BioGRID-ORCS" id="5729">
    <property type="hits" value="21 hits in 1152 CRISPR screens"/>
</dbReference>
<dbReference type="ChiTaRS" id="PTGDR">
    <property type="organism name" value="human"/>
</dbReference>
<dbReference type="GeneWiki" id="Prostaglandin_D2_receptor"/>
<dbReference type="GenomeRNAi" id="5729"/>
<dbReference type="Pharos" id="Q13258">
    <property type="development level" value="Tclin"/>
</dbReference>
<dbReference type="PRO" id="PR:Q13258"/>
<dbReference type="Proteomes" id="UP000005640">
    <property type="component" value="Chromosome 14"/>
</dbReference>
<dbReference type="RNAct" id="Q13258">
    <property type="molecule type" value="protein"/>
</dbReference>
<dbReference type="Bgee" id="ENSG00000168229">
    <property type="expression patterns" value="Expressed in granulocyte and 108 other cell types or tissues"/>
</dbReference>
<dbReference type="GO" id="GO:0016020">
    <property type="term" value="C:membrane"/>
    <property type="evidence" value="ECO:0000303"/>
    <property type="project" value="UniProtKB"/>
</dbReference>
<dbReference type="GO" id="GO:0005886">
    <property type="term" value="C:plasma membrane"/>
    <property type="evidence" value="ECO:0000314"/>
    <property type="project" value="BHF-UCL"/>
</dbReference>
<dbReference type="GO" id="GO:0004956">
    <property type="term" value="F:prostaglandin D receptor activity"/>
    <property type="evidence" value="ECO:0000318"/>
    <property type="project" value="GO_Central"/>
</dbReference>
<dbReference type="GO" id="GO:0001785">
    <property type="term" value="F:prostaglandin J receptor activity"/>
    <property type="evidence" value="ECO:0007669"/>
    <property type="project" value="Ensembl"/>
</dbReference>
<dbReference type="GO" id="GO:0046085">
    <property type="term" value="P:adenosine metabolic process"/>
    <property type="evidence" value="ECO:0007669"/>
    <property type="project" value="Ensembl"/>
</dbReference>
<dbReference type="GO" id="GO:0071799">
    <property type="term" value="P:cellular response to prostaglandin D stimulus"/>
    <property type="evidence" value="ECO:0000314"/>
    <property type="project" value="BHF-UCL"/>
</dbReference>
<dbReference type="GO" id="GO:0007186">
    <property type="term" value="P:G protein-coupled receptor signaling pathway"/>
    <property type="evidence" value="ECO:0000303"/>
    <property type="project" value="UniProtKB"/>
</dbReference>
<dbReference type="GO" id="GO:0006954">
    <property type="term" value="P:inflammatory response"/>
    <property type="evidence" value="ECO:0000318"/>
    <property type="project" value="GO_Central"/>
</dbReference>
<dbReference type="GO" id="GO:0030238">
    <property type="term" value="P:male sex determination"/>
    <property type="evidence" value="ECO:0007669"/>
    <property type="project" value="Ensembl"/>
</dbReference>
<dbReference type="GO" id="GO:0043303">
    <property type="term" value="P:mast cell degranulation"/>
    <property type="evidence" value="ECO:0007669"/>
    <property type="project" value="UniProtKB-KW"/>
</dbReference>
<dbReference type="GO" id="GO:0007204">
    <property type="term" value="P:positive regulation of cytosolic calcium ion concentration"/>
    <property type="evidence" value="ECO:0000318"/>
    <property type="project" value="GO_Central"/>
</dbReference>
<dbReference type="GO" id="GO:0030431">
    <property type="term" value="P:sleep"/>
    <property type="evidence" value="ECO:0007669"/>
    <property type="project" value="Ensembl"/>
</dbReference>
<dbReference type="CDD" id="cd15140">
    <property type="entry name" value="7tmA_PGD2"/>
    <property type="match status" value="1"/>
</dbReference>
<dbReference type="FunFam" id="1.20.1070.10:FF:000175">
    <property type="entry name" value="Prostaglandin D2 receptor"/>
    <property type="match status" value="1"/>
</dbReference>
<dbReference type="Gene3D" id="1.20.1070.10">
    <property type="entry name" value="Rhodopsin 7-helix transmembrane proteins"/>
    <property type="match status" value="1"/>
</dbReference>
<dbReference type="InterPro" id="IPR000276">
    <property type="entry name" value="GPCR_Rhodpsn"/>
</dbReference>
<dbReference type="InterPro" id="IPR017452">
    <property type="entry name" value="GPCR_Rhodpsn_7TM"/>
</dbReference>
<dbReference type="InterPro" id="IPR000376">
    <property type="entry name" value="Pglndn_D_rcpt"/>
</dbReference>
<dbReference type="InterPro" id="IPR008365">
    <property type="entry name" value="Prostanoid_rcpt"/>
</dbReference>
<dbReference type="PANTHER" id="PTHR11866">
    <property type="entry name" value="G-PROTEIN COUPLED RECEPTOR FAMILY 1 MEMBER"/>
    <property type="match status" value="1"/>
</dbReference>
<dbReference type="PANTHER" id="PTHR11866:SF14">
    <property type="entry name" value="PROSTAGLANDIN D2 RECEPTOR"/>
    <property type="match status" value="1"/>
</dbReference>
<dbReference type="Pfam" id="PF00001">
    <property type="entry name" value="7tm_1"/>
    <property type="match status" value="1"/>
</dbReference>
<dbReference type="PRINTS" id="PR01788">
    <property type="entry name" value="PROSTANOIDR"/>
</dbReference>
<dbReference type="PRINTS" id="PR00854">
    <property type="entry name" value="PRSTNOIDDPR"/>
</dbReference>
<dbReference type="SUPFAM" id="SSF81321">
    <property type="entry name" value="Family A G protein-coupled receptor-like"/>
    <property type="match status" value="1"/>
</dbReference>
<dbReference type="PROSITE" id="PS50262">
    <property type="entry name" value="G_PROTEIN_RECEP_F1_2"/>
    <property type="match status" value="1"/>
</dbReference>
<gene>
    <name type="primary">PTGDR</name>
</gene>